<sequence length="537" mass="57125">MAKQIIFGEKVRVSLKKGVDTLANTVRVTLGPKGHPVALERKWGAPTVIDDGVTIARDIELPDAFENMGAQLVKEAATRTSDAAGDGTTTSIVLAQALINEAFKNIAAGAEPINLKRGIEKAVAALKAQLRKNSTPVKGKQQIVQVATITGKDPEIGNLIADVMDKVGKDGVITIEESRGLRYETSYVEGMQFDRGYISAYFVTDPGRMESVMEDATILMTDRKIETVAELLPALEKILQISKNLVIVAENVEAEALATLVVNKLRGNLNILAVKAPGYGDRQKAMLEDMAILTGGHVISKEAGRKLDSVTEADLGHARRIVSNKDKTTIIDGEGSAEAIKDRIKQIKAQIEETESAFDREKLQERQAALVGGVAVIAVGAATETEMKERKARVEDALAATRAAIEEGILPGGGTGLLNALPCLDALKLEGDEATGVNIVRKALIEPVRWIATNAGKDGNVIVDKVKNSPVGHGYNAENDVFGDMAEMGIIDPTMVVRSALENAASIANMVLITDSLVADIQEKAPAAPGPEAAGMY</sequence>
<proteinExistence type="inferred from homology"/>
<evidence type="ECO:0000255" key="1">
    <source>
        <dbReference type="HAMAP-Rule" id="MF_00600"/>
    </source>
</evidence>
<accession>A5FPR4</accession>
<name>CH60_DEHMB</name>
<keyword id="KW-0067">ATP-binding</keyword>
<keyword id="KW-0143">Chaperone</keyword>
<keyword id="KW-0963">Cytoplasm</keyword>
<keyword id="KW-0413">Isomerase</keyword>
<keyword id="KW-0547">Nucleotide-binding</keyword>
<gene>
    <name evidence="1" type="primary">groEL</name>
    <name evidence="1" type="synonym">groL</name>
    <name type="ordered locus">DehaBAV1_1236</name>
</gene>
<reference key="1">
    <citation type="submission" date="2007-05" db="EMBL/GenBank/DDBJ databases">
        <title>Complete sequence of Dehalococcoides sp. BAV1.</title>
        <authorList>
            <consortium name="US DOE Joint Genome Institute"/>
            <person name="Copeland A."/>
            <person name="Lucas S."/>
            <person name="Lapidus A."/>
            <person name="Barry K."/>
            <person name="Detter J.C."/>
            <person name="Glavina del Rio T."/>
            <person name="Hammon N."/>
            <person name="Israni S."/>
            <person name="Pitluck S."/>
            <person name="Lowry S."/>
            <person name="Clum A."/>
            <person name="Schmutz J."/>
            <person name="Larimer F."/>
            <person name="Land M."/>
            <person name="Hauser L."/>
            <person name="Kyrpides N."/>
            <person name="Kim E."/>
            <person name="Ritalahti K.M."/>
            <person name="Loeffler F."/>
            <person name="Richardson P."/>
        </authorList>
    </citation>
    <scope>NUCLEOTIDE SEQUENCE [LARGE SCALE GENOMIC DNA]</scope>
    <source>
        <strain>ATCC BAA-2100 / JCM 16839 / KCTC 5957 / BAV1</strain>
    </source>
</reference>
<feature type="chain" id="PRO_1000082472" description="Chaperonin GroEL">
    <location>
        <begin position="1"/>
        <end position="537"/>
    </location>
</feature>
<feature type="binding site" evidence="1">
    <location>
        <begin position="29"/>
        <end position="32"/>
    </location>
    <ligand>
        <name>ATP</name>
        <dbReference type="ChEBI" id="CHEBI:30616"/>
    </ligand>
</feature>
<feature type="binding site" evidence="1">
    <location>
        <begin position="86"/>
        <end position="90"/>
    </location>
    <ligand>
        <name>ATP</name>
        <dbReference type="ChEBI" id="CHEBI:30616"/>
    </ligand>
</feature>
<feature type="binding site" evidence="1">
    <location>
        <position position="413"/>
    </location>
    <ligand>
        <name>ATP</name>
        <dbReference type="ChEBI" id="CHEBI:30616"/>
    </ligand>
</feature>
<feature type="binding site" evidence="1">
    <location>
        <position position="492"/>
    </location>
    <ligand>
        <name>ATP</name>
        <dbReference type="ChEBI" id="CHEBI:30616"/>
    </ligand>
</feature>
<comment type="function">
    <text evidence="1">Together with its co-chaperonin GroES, plays an essential role in assisting protein folding. The GroEL-GroES system forms a nano-cage that allows encapsulation of the non-native substrate proteins and provides a physical environment optimized to promote and accelerate protein folding.</text>
</comment>
<comment type="catalytic activity">
    <reaction evidence="1">
        <text>ATP + H2O + a folded polypeptide = ADP + phosphate + an unfolded polypeptide.</text>
        <dbReference type="EC" id="5.6.1.7"/>
    </reaction>
</comment>
<comment type="subunit">
    <text evidence="1">Forms a cylinder of 14 subunits composed of two heptameric rings stacked back-to-back. Interacts with the co-chaperonin GroES.</text>
</comment>
<comment type="subcellular location">
    <subcellularLocation>
        <location evidence="1">Cytoplasm</location>
    </subcellularLocation>
</comment>
<comment type="similarity">
    <text evidence="1">Belongs to the chaperonin (HSP60) family.</text>
</comment>
<organism>
    <name type="scientific">Dehalococcoides mccartyi (strain ATCC BAA-2100 / JCM 16839 / KCTC 5957 / BAV1)</name>
    <dbReference type="NCBI Taxonomy" id="216389"/>
    <lineage>
        <taxon>Bacteria</taxon>
        <taxon>Bacillati</taxon>
        <taxon>Chloroflexota</taxon>
        <taxon>Dehalococcoidia</taxon>
        <taxon>Dehalococcoidales</taxon>
        <taxon>Dehalococcoidaceae</taxon>
        <taxon>Dehalococcoides</taxon>
    </lineage>
</organism>
<dbReference type="EC" id="5.6.1.7" evidence="1"/>
<dbReference type="EMBL" id="CP000688">
    <property type="protein sequence ID" value="ABQ17815.1"/>
    <property type="molecule type" value="Genomic_DNA"/>
</dbReference>
<dbReference type="SMR" id="A5FPR4"/>
<dbReference type="KEGG" id="deb:DehaBAV1_1236"/>
<dbReference type="PATRIC" id="fig|216389.18.peg.1305"/>
<dbReference type="HOGENOM" id="CLU_016503_3_0_0"/>
<dbReference type="GO" id="GO:0005737">
    <property type="term" value="C:cytoplasm"/>
    <property type="evidence" value="ECO:0007669"/>
    <property type="project" value="UniProtKB-SubCell"/>
</dbReference>
<dbReference type="GO" id="GO:0005524">
    <property type="term" value="F:ATP binding"/>
    <property type="evidence" value="ECO:0007669"/>
    <property type="project" value="UniProtKB-UniRule"/>
</dbReference>
<dbReference type="GO" id="GO:0140662">
    <property type="term" value="F:ATP-dependent protein folding chaperone"/>
    <property type="evidence" value="ECO:0007669"/>
    <property type="project" value="InterPro"/>
</dbReference>
<dbReference type="GO" id="GO:0016853">
    <property type="term" value="F:isomerase activity"/>
    <property type="evidence" value="ECO:0007669"/>
    <property type="project" value="UniProtKB-KW"/>
</dbReference>
<dbReference type="GO" id="GO:0051082">
    <property type="term" value="F:unfolded protein binding"/>
    <property type="evidence" value="ECO:0007669"/>
    <property type="project" value="UniProtKB-UniRule"/>
</dbReference>
<dbReference type="GO" id="GO:0042026">
    <property type="term" value="P:protein refolding"/>
    <property type="evidence" value="ECO:0007669"/>
    <property type="project" value="UniProtKB-UniRule"/>
</dbReference>
<dbReference type="CDD" id="cd03344">
    <property type="entry name" value="GroEL"/>
    <property type="match status" value="1"/>
</dbReference>
<dbReference type="FunFam" id="3.50.7.10:FF:000001">
    <property type="entry name" value="60 kDa chaperonin"/>
    <property type="match status" value="1"/>
</dbReference>
<dbReference type="Gene3D" id="3.50.7.10">
    <property type="entry name" value="GroEL"/>
    <property type="match status" value="1"/>
</dbReference>
<dbReference type="Gene3D" id="1.10.560.10">
    <property type="entry name" value="GroEL-like equatorial domain"/>
    <property type="match status" value="1"/>
</dbReference>
<dbReference type="Gene3D" id="3.30.260.10">
    <property type="entry name" value="TCP-1-like chaperonin intermediate domain"/>
    <property type="match status" value="1"/>
</dbReference>
<dbReference type="HAMAP" id="MF_00600">
    <property type="entry name" value="CH60"/>
    <property type="match status" value="1"/>
</dbReference>
<dbReference type="InterPro" id="IPR018370">
    <property type="entry name" value="Chaperonin_Cpn60_CS"/>
</dbReference>
<dbReference type="InterPro" id="IPR001844">
    <property type="entry name" value="Cpn60/GroEL"/>
</dbReference>
<dbReference type="InterPro" id="IPR002423">
    <property type="entry name" value="Cpn60/GroEL/TCP-1"/>
</dbReference>
<dbReference type="InterPro" id="IPR027409">
    <property type="entry name" value="GroEL-like_apical_dom_sf"/>
</dbReference>
<dbReference type="InterPro" id="IPR027413">
    <property type="entry name" value="GROEL-like_equatorial_sf"/>
</dbReference>
<dbReference type="InterPro" id="IPR027410">
    <property type="entry name" value="TCP-1-like_intermed_sf"/>
</dbReference>
<dbReference type="NCBIfam" id="TIGR02348">
    <property type="entry name" value="GroEL"/>
    <property type="match status" value="1"/>
</dbReference>
<dbReference type="NCBIfam" id="NF000592">
    <property type="entry name" value="PRK00013.1"/>
    <property type="match status" value="1"/>
</dbReference>
<dbReference type="NCBIfam" id="NF009487">
    <property type="entry name" value="PRK12849.1"/>
    <property type="match status" value="1"/>
</dbReference>
<dbReference type="NCBIfam" id="NF009488">
    <property type="entry name" value="PRK12850.1"/>
    <property type="match status" value="1"/>
</dbReference>
<dbReference type="NCBIfam" id="NF009489">
    <property type="entry name" value="PRK12851.1"/>
    <property type="match status" value="1"/>
</dbReference>
<dbReference type="PANTHER" id="PTHR45633">
    <property type="entry name" value="60 KDA HEAT SHOCK PROTEIN, MITOCHONDRIAL"/>
    <property type="match status" value="1"/>
</dbReference>
<dbReference type="Pfam" id="PF00118">
    <property type="entry name" value="Cpn60_TCP1"/>
    <property type="match status" value="1"/>
</dbReference>
<dbReference type="PRINTS" id="PR00298">
    <property type="entry name" value="CHAPERONIN60"/>
</dbReference>
<dbReference type="SUPFAM" id="SSF52029">
    <property type="entry name" value="GroEL apical domain-like"/>
    <property type="match status" value="1"/>
</dbReference>
<dbReference type="SUPFAM" id="SSF48592">
    <property type="entry name" value="GroEL equatorial domain-like"/>
    <property type="match status" value="1"/>
</dbReference>
<dbReference type="SUPFAM" id="SSF54849">
    <property type="entry name" value="GroEL-intermediate domain like"/>
    <property type="match status" value="1"/>
</dbReference>
<dbReference type="PROSITE" id="PS00296">
    <property type="entry name" value="CHAPERONINS_CPN60"/>
    <property type="match status" value="1"/>
</dbReference>
<protein>
    <recommendedName>
        <fullName evidence="1">Chaperonin GroEL</fullName>
        <ecNumber evidence="1">5.6.1.7</ecNumber>
    </recommendedName>
    <alternativeName>
        <fullName evidence="1">60 kDa chaperonin</fullName>
    </alternativeName>
    <alternativeName>
        <fullName evidence="1">Chaperonin-60</fullName>
        <shortName evidence="1">Cpn60</shortName>
    </alternativeName>
</protein>